<accession>B6JA27</accession>
<accession>F8BUR4</accession>
<dbReference type="EC" id="1.17.7.3" evidence="1"/>
<dbReference type="EMBL" id="CP001196">
    <property type="protein sequence ID" value="ACI91270.1"/>
    <property type="molecule type" value="Genomic_DNA"/>
</dbReference>
<dbReference type="EMBL" id="CP002826">
    <property type="protein sequence ID" value="AEI05117.1"/>
    <property type="molecule type" value="Genomic_DNA"/>
</dbReference>
<dbReference type="RefSeq" id="WP_012561301.1">
    <property type="nucleotide sequence ID" value="NC_015684.1"/>
</dbReference>
<dbReference type="SMR" id="B6JA27"/>
<dbReference type="STRING" id="504832.OCA5_c03920"/>
<dbReference type="KEGG" id="oca:OCAR_4119"/>
<dbReference type="KEGG" id="ocg:OCA5_c03920"/>
<dbReference type="PATRIC" id="fig|504832.7.peg.412"/>
<dbReference type="eggNOG" id="COG0821">
    <property type="taxonomic scope" value="Bacteria"/>
</dbReference>
<dbReference type="HOGENOM" id="CLU_042258_1_0_5"/>
<dbReference type="OrthoDB" id="9803214at2"/>
<dbReference type="UniPathway" id="UPA00056">
    <property type="reaction ID" value="UER00096"/>
</dbReference>
<dbReference type="Proteomes" id="UP000007730">
    <property type="component" value="Chromosome"/>
</dbReference>
<dbReference type="GO" id="GO:0051539">
    <property type="term" value="F:4 iron, 4 sulfur cluster binding"/>
    <property type="evidence" value="ECO:0007669"/>
    <property type="project" value="UniProtKB-UniRule"/>
</dbReference>
<dbReference type="GO" id="GO:0046429">
    <property type="term" value="F:4-hydroxy-3-methylbut-2-en-1-yl diphosphate synthase activity (ferredoxin)"/>
    <property type="evidence" value="ECO:0007669"/>
    <property type="project" value="UniProtKB-UniRule"/>
</dbReference>
<dbReference type="GO" id="GO:0141197">
    <property type="term" value="F:4-hydroxy-3-methylbut-2-enyl-diphosphate synthase activity (flavodoxin)"/>
    <property type="evidence" value="ECO:0007669"/>
    <property type="project" value="UniProtKB-EC"/>
</dbReference>
<dbReference type="GO" id="GO:0005506">
    <property type="term" value="F:iron ion binding"/>
    <property type="evidence" value="ECO:0007669"/>
    <property type="project" value="InterPro"/>
</dbReference>
<dbReference type="GO" id="GO:0019288">
    <property type="term" value="P:isopentenyl diphosphate biosynthetic process, methylerythritol 4-phosphate pathway"/>
    <property type="evidence" value="ECO:0007669"/>
    <property type="project" value="UniProtKB-UniRule"/>
</dbReference>
<dbReference type="GO" id="GO:0016114">
    <property type="term" value="P:terpenoid biosynthetic process"/>
    <property type="evidence" value="ECO:0007669"/>
    <property type="project" value="InterPro"/>
</dbReference>
<dbReference type="FunFam" id="3.20.20.20:FF:000001">
    <property type="entry name" value="4-hydroxy-3-methylbut-2-en-1-yl diphosphate synthase (flavodoxin)"/>
    <property type="match status" value="1"/>
</dbReference>
<dbReference type="FunFam" id="3.30.413.10:FF:000012">
    <property type="entry name" value="4-hydroxy-3-methylbut-2-en-1-yl diphosphate synthase (flavodoxin)"/>
    <property type="match status" value="1"/>
</dbReference>
<dbReference type="Gene3D" id="3.20.20.20">
    <property type="entry name" value="Dihydropteroate synthase-like"/>
    <property type="match status" value="1"/>
</dbReference>
<dbReference type="Gene3D" id="3.30.413.10">
    <property type="entry name" value="Sulfite Reductase Hemoprotein, domain 1"/>
    <property type="match status" value="1"/>
</dbReference>
<dbReference type="HAMAP" id="MF_00159">
    <property type="entry name" value="IspG"/>
    <property type="match status" value="1"/>
</dbReference>
<dbReference type="InterPro" id="IPR011005">
    <property type="entry name" value="Dihydropteroate_synth-like_sf"/>
</dbReference>
<dbReference type="InterPro" id="IPR016425">
    <property type="entry name" value="IspG_bac"/>
</dbReference>
<dbReference type="InterPro" id="IPR004588">
    <property type="entry name" value="IspG_bac-typ"/>
</dbReference>
<dbReference type="InterPro" id="IPR045854">
    <property type="entry name" value="NO2/SO3_Rdtase_4Fe4S_sf"/>
</dbReference>
<dbReference type="NCBIfam" id="TIGR00612">
    <property type="entry name" value="ispG_gcpE"/>
    <property type="match status" value="1"/>
</dbReference>
<dbReference type="NCBIfam" id="NF001540">
    <property type="entry name" value="PRK00366.1"/>
    <property type="match status" value="1"/>
</dbReference>
<dbReference type="PANTHER" id="PTHR30454">
    <property type="entry name" value="4-HYDROXY-3-METHYLBUT-2-EN-1-YL DIPHOSPHATE SYNTHASE"/>
    <property type="match status" value="1"/>
</dbReference>
<dbReference type="PANTHER" id="PTHR30454:SF0">
    <property type="entry name" value="4-HYDROXY-3-METHYLBUT-2-EN-1-YL DIPHOSPHATE SYNTHASE (FERREDOXIN), CHLOROPLASTIC"/>
    <property type="match status" value="1"/>
</dbReference>
<dbReference type="Pfam" id="PF04551">
    <property type="entry name" value="GcpE"/>
    <property type="match status" value="1"/>
</dbReference>
<dbReference type="PIRSF" id="PIRSF004640">
    <property type="entry name" value="IspG"/>
    <property type="match status" value="1"/>
</dbReference>
<dbReference type="SUPFAM" id="SSF56014">
    <property type="entry name" value="Nitrite and sulphite reductase 4Fe-4S domain-like"/>
    <property type="match status" value="1"/>
</dbReference>
<gene>
    <name evidence="1" type="primary">ispG</name>
    <name type="ordered locus">OCAR_4119</name>
    <name type="ordered locus">OCA5_c03920</name>
</gene>
<comment type="function">
    <text evidence="1">Converts 2C-methyl-D-erythritol 2,4-cyclodiphosphate (ME-2,4cPP) into 1-hydroxy-2-methyl-2-(E)-butenyl 4-diphosphate.</text>
</comment>
<comment type="catalytic activity">
    <reaction evidence="1">
        <text>(2E)-4-hydroxy-3-methylbut-2-enyl diphosphate + oxidized [flavodoxin] + H2O + 2 H(+) = 2-C-methyl-D-erythritol 2,4-cyclic diphosphate + reduced [flavodoxin]</text>
        <dbReference type="Rhea" id="RHEA:43604"/>
        <dbReference type="Rhea" id="RHEA-COMP:10622"/>
        <dbReference type="Rhea" id="RHEA-COMP:10623"/>
        <dbReference type="ChEBI" id="CHEBI:15377"/>
        <dbReference type="ChEBI" id="CHEBI:15378"/>
        <dbReference type="ChEBI" id="CHEBI:57618"/>
        <dbReference type="ChEBI" id="CHEBI:58210"/>
        <dbReference type="ChEBI" id="CHEBI:58483"/>
        <dbReference type="ChEBI" id="CHEBI:128753"/>
        <dbReference type="EC" id="1.17.7.3"/>
    </reaction>
</comment>
<comment type="cofactor">
    <cofactor evidence="1">
        <name>[4Fe-4S] cluster</name>
        <dbReference type="ChEBI" id="CHEBI:49883"/>
    </cofactor>
    <text evidence="1">Binds 1 [4Fe-4S] cluster.</text>
</comment>
<comment type="pathway">
    <text evidence="1">Isoprenoid biosynthesis; isopentenyl diphosphate biosynthesis via DXP pathway; isopentenyl diphosphate from 1-deoxy-D-xylulose 5-phosphate: step 5/6.</text>
</comment>
<comment type="similarity">
    <text evidence="1">Belongs to the IspG family.</text>
</comment>
<keyword id="KW-0004">4Fe-4S</keyword>
<keyword id="KW-0408">Iron</keyword>
<keyword id="KW-0411">Iron-sulfur</keyword>
<keyword id="KW-0414">Isoprene biosynthesis</keyword>
<keyword id="KW-0479">Metal-binding</keyword>
<keyword id="KW-0560">Oxidoreductase</keyword>
<keyword id="KW-1185">Reference proteome</keyword>
<organism>
    <name type="scientific">Afipia carboxidovorans (strain ATCC 49405 / DSM 1227 / KCTC 32145 / OM5)</name>
    <name type="common">Oligotropha carboxidovorans</name>
    <dbReference type="NCBI Taxonomy" id="504832"/>
    <lineage>
        <taxon>Bacteria</taxon>
        <taxon>Pseudomonadati</taxon>
        <taxon>Pseudomonadota</taxon>
        <taxon>Alphaproteobacteria</taxon>
        <taxon>Hyphomicrobiales</taxon>
        <taxon>Nitrobacteraceae</taxon>
        <taxon>Afipia</taxon>
    </lineage>
</organism>
<protein>
    <recommendedName>
        <fullName evidence="1">4-hydroxy-3-methylbut-2-en-1-yl diphosphate synthase (flavodoxin)</fullName>
        <ecNumber evidence="1">1.17.7.3</ecNumber>
    </recommendedName>
    <alternativeName>
        <fullName evidence="1">1-hydroxy-2-methyl-2-(E)-butenyl 4-diphosphate synthase</fullName>
    </alternativeName>
</protein>
<feature type="chain" id="PRO_1000097171" description="4-hydroxy-3-methylbut-2-en-1-yl diphosphate synthase (flavodoxin)">
    <location>
        <begin position="1"/>
        <end position="435"/>
    </location>
</feature>
<feature type="region of interest" description="Disordered" evidence="2">
    <location>
        <begin position="1"/>
        <end position="24"/>
    </location>
</feature>
<feature type="compositionally biased region" description="Basic and acidic residues" evidence="2">
    <location>
        <begin position="1"/>
        <end position="15"/>
    </location>
</feature>
<feature type="binding site" evidence="1">
    <location>
        <position position="316"/>
    </location>
    <ligand>
        <name>[4Fe-4S] cluster</name>
        <dbReference type="ChEBI" id="CHEBI:49883"/>
    </ligand>
</feature>
<feature type="binding site" evidence="1">
    <location>
        <position position="319"/>
    </location>
    <ligand>
        <name>[4Fe-4S] cluster</name>
        <dbReference type="ChEBI" id="CHEBI:49883"/>
    </ligand>
</feature>
<feature type="binding site" evidence="1">
    <location>
        <position position="362"/>
    </location>
    <ligand>
        <name>[4Fe-4S] cluster</name>
        <dbReference type="ChEBI" id="CHEBI:49883"/>
    </ligand>
</feature>
<feature type="binding site" evidence="1">
    <location>
        <position position="369"/>
    </location>
    <ligand>
        <name>[4Fe-4S] cluster</name>
        <dbReference type="ChEBI" id="CHEBI:49883"/>
    </ligand>
</feature>
<name>ISPG_AFIC5</name>
<sequence length="435" mass="46470">MTDVDLRARPQEGMKEIPAGPKGRHQTVQVTVGNVKVGGGAPIVVQSMTNTDTADIDSTVKQVAALARAGSEMVRITVDREEAAAAVPHIREKLDKLGVDVPLIGDFHYIGHKLLSEYPACAAALAKYRINPGNVGFKNKRDTQFTEIVEIALKNNKAVRIGANWGSLDQELLTRLMEDNAKSPNPIDARAVTREAMVQSALLSAQRAEEIGLPKNKMILSAKVSNVQDLIAVYRELAARSDYAIHLGLTEAGMGSKGIVASSAALGILLQEGIGDTIRVSLTPEPGGDRTLEVKVAQEILQTMGFRTFVPLVAACPGCGRTTSTVFQELARDIQAFINEEMPAWRNRYPGVEQLNVAVMGCIVNGPGESKHADIGISLPGTGETPAAPVFVDGQKFRTLRGATIAADFKALVIDYIEQRYGGAPAKPSTVTAAE</sequence>
<proteinExistence type="inferred from homology"/>
<reference key="1">
    <citation type="journal article" date="2008" name="J. Bacteriol.">
        <title>Genome sequence of the chemolithoautotrophic bacterium Oligotropha carboxidovorans OM5T.</title>
        <authorList>
            <person name="Paul D."/>
            <person name="Bridges S."/>
            <person name="Burgess S.C."/>
            <person name="Dandass Y."/>
            <person name="Lawrence M.L."/>
        </authorList>
    </citation>
    <scope>NUCLEOTIDE SEQUENCE [LARGE SCALE GENOMIC DNA]</scope>
    <source>
        <strain>ATCC 49405 / DSM 1227 / KCTC 32145 / OM5</strain>
    </source>
</reference>
<reference key="2">
    <citation type="journal article" date="2011" name="J. Bacteriol.">
        <title>Complete genome sequences of the chemolithoautotrophic Oligotropha carboxidovorans strains OM4 and OM5.</title>
        <authorList>
            <person name="Volland S."/>
            <person name="Rachinger M."/>
            <person name="Strittmatter A."/>
            <person name="Daniel R."/>
            <person name="Gottschalk G."/>
            <person name="Meyer O."/>
        </authorList>
    </citation>
    <scope>NUCLEOTIDE SEQUENCE [LARGE SCALE GENOMIC DNA]</scope>
    <source>
        <strain>ATCC 49405 / DSM 1227 / KCTC 32145 / OM5</strain>
    </source>
</reference>
<evidence type="ECO:0000255" key="1">
    <source>
        <dbReference type="HAMAP-Rule" id="MF_00159"/>
    </source>
</evidence>
<evidence type="ECO:0000256" key="2">
    <source>
        <dbReference type="SAM" id="MobiDB-lite"/>
    </source>
</evidence>